<feature type="chain" id="PRO_0000456456" description="Highly reducing polyketide synthase Preu5">
    <location>
        <begin position="1"/>
        <end position="2524"/>
    </location>
</feature>
<feature type="domain" description="Ketosynthase family 3 (KS3)" evidence="3 9">
    <location>
        <begin position="5"/>
        <end position="426"/>
    </location>
</feature>
<feature type="domain" description="PKS/mFAS DH" evidence="4">
    <location>
        <begin position="950"/>
        <end position="1264"/>
    </location>
</feature>
<feature type="domain" description="Carrier" evidence="2">
    <location>
        <begin position="2445"/>
        <end position="2522"/>
    </location>
</feature>
<feature type="region of interest" description="Disordered" evidence="6">
    <location>
        <begin position="431"/>
        <end position="470"/>
    </location>
</feature>
<feature type="region of interest" description="Malonyl-CoA:ACP transacylase (MAT) domain" evidence="1 9">
    <location>
        <begin position="559"/>
        <end position="882"/>
    </location>
</feature>
<feature type="region of interest" description="Dehydratase (DH) domain" evidence="1 9">
    <location>
        <begin position="950"/>
        <end position="1266"/>
    </location>
</feature>
<feature type="region of interest" description="N-terminal hotdog fold" evidence="4">
    <location>
        <begin position="950"/>
        <end position="1084"/>
    </location>
</feature>
<feature type="region of interest" description="C-terminal hotdog fold" evidence="4">
    <location>
        <begin position="1102"/>
        <end position="1264"/>
    </location>
</feature>
<feature type="region of interest" description="Methyltransferase (CMet) domain" evidence="1 9">
    <location>
        <begin position="1418"/>
        <end position="1611"/>
    </location>
</feature>
<feature type="region of interest" description="Enoylreductase (ER) domain" evidence="1 9">
    <location>
        <begin position="1825"/>
        <end position="2139"/>
    </location>
</feature>
<feature type="region of interest" description="Ketoreductase (KR) domain" evidence="1 9">
    <location>
        <begin position="2164"/>
        <end position="2339"/>
    </location>
</feature>
<feature type="compositionally biased region" description="Low complexity" evidence="6">
    <location>
        <begin position="437"/>
        <end position="464"/>
    </location>
</feature>
<feature type="active site" description="For beta-ketoacyl synthase activity" evidence="3">
    <location>
        <position position="175"/>
    </location>
</feature>
<feature type="active site" description="For beta-ketoacyl synthase activity" evidence="3">
    <location>
        <position position="310"/>
    </location>
</feature>
<feature type="active site" description="For beta-ketoacyl synthase activity" evidence="3">
    <location>
        <position position="350"/>
    </location>
</feature>
<feature type="active site" description="For malonyltransferase activity" evidence="5">
    <location>
        <position position="648"/>
    </location>
</feature>
<feature type="active site" description="Proton acceptor; for dehydratase activity" evidence="4">
    <location>
        <position position="982"/>
    </location>
</feature>
<feature type="active site" description="Proton donor; for dehydratase activity" evidence="4">
    <location>
        <position position="1171"/>
    </location>
</feature>
<feature type="modified residue" description="O-(pantetheine 4'-phosphoryl)serine" evidence="2">
    <location>
        <position position="2482"/>
    </location>
</feature>
<accession>P9WET4</accession>
<keyword id="KW-0012">Acyltransferase</keyword>
<keyword id="KW-0489">Methyltransferase</keyword>
<keyword id="KW-0511">Multifunctional enzyme</keyword>
<keyword id="KW-0521">NADP</keyword>
<keyword id="KW-0560">Oxidoreductase</keyword>
<keyword id="KW-0596">Phosphopantetheine</keyword>
<keyword id="KW-0597">Phosphoprotein</keyword>
<keyword id="KW-0949">S-adenosyl-L-methionine</keyword>
<keyword id="KW-0808">Transferase</keyword>
<name>PREU5_PREIS</name>
<dbReference type="EC" id="2.3.1.-" evidence="7"/>
<dbReference type="EMBL" id="OK493439">
    <property type="protein sequence ID" value="UNY67717.1"/>
    <property type="molecule type" value="mRNA"/>
</dbReference>
<dbReference type="SMR" id="P9WET4"/>
<dbReference type="GO" id="GO:0004312">
    <property type="term" value="F:fatty acid synthase activity"/>
    <property type="evidence" value="ECO:0007669"/>
    <property type="project" value="TreeGrafter"/>
</dbReference>
<dbReference type="GO" id="GO:0008168">
    <property type="term" value="F:methyltransferase activity"/>
    <property type="evidence" value="ECO:0007669"/>
    <property type="project" value="UniProtKB-KW"/>
</dbReference>
<dbReference type="GO" id="GO:0016491">
    <property type="term" value="F:oxidoreductase activity"/>
    <property type="evidence" value="ECO:0007669"/>
    <property type="project" value="UniProtKB-KW"/>
</dbReference>
<dbReference type="GO" id="GO:0031177">
    <property type="term" value="F:phosphopantetheine binding"/>
    <property type="evidence" value="ECO:0007669"/>
    <property type="project" value="InterPro"/>
</dbReference>
<dbReference type="GO" id="GO:0006633">
    <property type="term" value="P:fatty acid biosynthetic process"/>
    <property type="evidence" value="ECO:0007669"/>
    <property type="project" value="TreeGrafter"/>
</dbReference>
<dbReference type="GO" id="GO:0032259">
    <property type="term" value="P:methylation"/>
    <property type="evidence" value="ECO:0007669"/>
    <property type="project" value="UniProtKB-KW"/>
</dbReference>
<dbReference type="GO" id="GO:0044550">
    <property type="term" value="P:secondary metabolite biosynthetic process"/>
    <property type="evidence" value="ECO:0007669"/>
    <property type="project" value="UniProtKB-ARBA"/>
</dbReference>
<dbReference type="CDD" id="cd02440">
    <property type="entry name" value="AdoMet_MTases"/>
    <property type="match status" value="1"/>
</dbReference>
<dbReference type="CDD" id="cd05195">
    <property type="entry name" value="enoyl_red"/>
    <property type="match status" value="1"/>
</dbReference>
<dbReference type="CDD" id="cd00833">
    <property type="entry name" value="PKS"/>
    <property type="match status" value="1"/>
</dbReference>
<dbReference type="Gene3D" id="3.30.70.3290">
    <property type="match status" value="1"/>
</dbReference>
<dbReference type="Gene3D" id="3.40.47.10">
    <property type="match status" value="1"/>
</dbReference>
<dbReference type="Gene3D" id="1.10.1200.10">
    <property type="entry name" value="ACP-like"/>
    <property type="match status" value="1"/>
</dbReference>
<dbReference type="Gene3D" id="3.40.366.10">
    <property type="entry name" value="Malonyl-Coenzyme A Acyl Carrier Protein, domain 2"/>
    <property type="match status" value="1"/>
</dbReference>
<dbReference type="Gene3D" id="3.90.180.10">
    <property type="entry name" value="Medium-chain alcohol dehydrogenases, catalytic domain"/>
    <property type="match status" value="1"/>
</dbReference>
<dbReference type="Gene3D" id="3.40.50.720">
    <property type="entry name" value="NAD(P)-binding Rossmann-like Domain"/>
    <property type="match status" value="1"/>
</dbReference>
<dbReference type="Gene3D" id="3.10.129.110">
    <property type="entry name" value="Polyketide synthase dehydratase"/>
    <property type="match status" value="1"/>
</dbReference>
<dbReference type="Gene3D" id="3.40.50.150">
    <property type="entry name" value="Vaccinia Virus protein VP39"/>
    <property type="match status" value="1"/>
</dbReference>
<dbReference type="InterPro" id="IPR001227">
    <property type="entry name" value="Ac_transferase_dom_sf"/>
</dbReference>
<dbReference type="InterPro" id="IPR036736">
    <property type="entry name" value="ACP-like_sf"/>
</dbReference>
<dbReference type="InterPro" id="IPR014043">
    <property type="entry name" value="Acyl_transferase_dom"/>
</dbReference>
<dbReference type="InterPro" id="IPR016035">
    <property type="entry name" value="Acyl_Trfase/lysoPLipase"/>
</dbReference>
<dbReference type="InterPro" id="IPR013154">
    <property type="entry name" value="ADH-like_N"/>
</dbReference>
<dbReference type="InterPro" id="IPR011032">
    <property type="entry name" value="GroES-like_sf"/>
</dbReference>
<dbReference type="InterPro" id="IPR014031">
    <property type="entry name" value="Ketoacyl_synth_C"/>
</dbReference>
<dbReference type="InterPro" id="IPR014030">
    <property type="entry name" value="Ketoacyl_synth_N"/>
</dbReference>
<dbReference type="InterPro" id="IPR016036">
    <property type="entry name" value="Malonyl_transacylase_ACP-bd"/>
</dbReference>
<dbReference type="InterPro" id="IPR013217">
    <property type="entry name" value="Methyltransf_12"/>
</dbReference>
<dbReference type="InterPro" id="IPR036291">
    <property type="entry name" value="NAD(P)-bd_dom_sf"/>
</dbReference>
<dbReference type="InterPro" id="IPR020841">
    <property type="entry name" value="PKS_Beta-ketoAc_synthase_dom"/>
</dbReference>
<dbReference type="InterPro" id="IPR042104">
    <property type="entry name" value="PKS_dehydratase_sf"/>
</dbReference>
<dbReference type="InterPro" id="IPR020807">
    <property type="entry name" value="PKS_DH"/>
</dbReference>
<dbReference type="InterPro" id="IPR049552">
    <property type="entry name" value="PKS_DH_N"/>
</dbReference>
<dbReference type="InterPro" id="IPR020843">
    <property type="entry name" value="PKS_ER"/>
</dbReference>
<dbReference type="InterPro" id="IPR013968">
    <property type="entry name" value="PKS_KR"/>
</dbReference>
<dbReference type="InterPro" id="IPR049900">
    <property type="entry name" value="PKS_mFAS_DH"/>
</dbReference>
<dbReference type="InterPro" id="IPR050091">
    <property type="entry name" value="PKS_NRPS_Biosynth_Enz"/>
</dbReference>
<dbReference type="InterPro" id="IPR020806">
    <property type="entry name" value="PKS_PP-bd"/>
</dbReference>
<dbReference type="InterPro" id="IPR009081">
    <property type="entry name" value="PP-bd_ACP"/>
</dbReference>
<dbReference type="InterPro" id="IPR029063">
    <property type="entry name" value="SAM-dependent_MTases_sf"/>
</dbReference>
<dbReference type="InterPro" id="IPR016039">
    <property type="entry name" value="Thiolase-like"/>
</dbReference>
<dbReference type="PANTHER" id="PTHR43775:SF29">
    <property type="entry name" value="ASPERFURANONE POLYKETIDE SYNTHASE AFOG-RELATED"/>
    <property type="match status" value="1"/>
</dbReference>
<dbReference type="PANTHER" id="PTHR43775">
    <property type="entry name" value="FATTY ACID SYNTHASE"/>
    <property type="match status" value="1"/>
</dbReference>
<dbReference type="Pfam" id="PF00698">
    <property type="entry name" value="Acyl_transf_1"/>
    <property type="match status" value="1"/>
</dbReference>
<dbReference type="Pfam" id="PF08240">
    <property type="entry name" value="ADH_N"/>
    <property type="match status" value="1"/>
</dbReference>
<dbReference type="Pfam" id="PF13602">
    <property type="entry name" value="ADH_zinc_N_2"/>
    <property type="match status" value="1"/>
</dbReference>
<dbReference type="Pfam" id="PF22621">
    <property type="entry name" value="CurL-like_PKS_C"/>
    <property type="match status" value="1"/>
</dbReference>
<dbReference type="Pfam" id="PF00109">
    <property type="entry name" value="ketoacyl-synt"/>
    <property type="match status" value="1"/>
</dbReference>
<dbReference type="Pfam" id="PF02801">
    <property type="entry name" value="Ketoacyl-synt_C"/>
    <property type="match status" value="1"/>
</dbReference>
<dbReference type="Pfam" id="PF08659">
    <property type="entry name" value="KR"/>
    <property type="match status" value="1"/>
</dbReference>
<dbReference type="Pfam" id="PF08242">
    <property type="entry name" value="Methyltransf_12"/>
    <property type="match status" value="1"/>
</dbReference>
<dbReference type="Pfam" id="PF21089">
    <property type="entry name" value="PKS_DH_N"/>
    <property type="match status" value="1"/>
</dbReference>
<dbReference type="Pfam" id="PF00550">
    <property type="entry name" value="PP-binding"/>
    <property type="match status" value="1"/>
</dbReference>
<dbReference type="SMART" id="SM00827">
    <property type="entry name" value="PKS_AT"/>
    <property type="match status" value="1"/>
</dbReference>
<dbReference type="SMART" id="SM00826">
    <property type="entry name" value="PKS_DH"/>
    <property type="match status" value="1"/>
</dbReference>
<dbReference type="SMART" id="SM00829">
    <property type="entry name" value="PKS_ER"/>
    <property type="match status" value="1"/>
</dbReference>
<dbReference type="SMART" id="SM00822">
    <property type="entry name" value="PKS_KR"/>
    <property type="match status" value="1"/>
</dbReference>
<dbReference type="SMART" id="SM00825">
    <property type="entry name" value="PKS_KS"/>
    <property type="match status" value="1"/>
</dbReference>
<dbReference type="SMART" id="SM00823">
    <property type="entry name" value="PKS_PP"/>
    <property type="match status" value="1"/>
</dbReference>
<dbReference type="SUPFAM" id="SSF47336">
    <property type="entry name" value="ACP-like"/>
    <property type="match status" value="1"/>
</dbReference>
<dbReference type="SUPFAM" id="SSF52151">
    <property type="entry name" value="FabD/lysophospholipase-like"/>
    <property type="match status" value="1"/>
</dbReference>
<dbReference type="SUPFAM" id="SSF50129">
    <property type="entry name" value="GroES-like"/>
    <property type="match status" value="1"/>
</dbReference>
<dbReference type="SUPFAM" id="SSF51735">
    <property type="entry name" value="NAD(P)-binding Rossmann-fold domains"/>
    <property type="match status" value="2"/>
</dbReference>
<dbReference type="SUPFAM" id="SSF55048">
    <property type="entry name" value="Probable ACP-binding domain of malonyl-CoA ACP transacylase"/>
    <property type="match status" value="1"/>
</dbReference>
<dbReference type="SUPFAM" id="SSF53335">
    <property type="entry name" value="S-adenosyl-L-methionine-dependent methyltransferases"/>
    <property type="match status" value="1"/>
</dbReference>
<dbReference type="SUPFAM" id="SSF53901">
    <property type="entry name" value="Thiolase-like"/>
    <property type="match status" value="1"/>
</dbReference>
<dbReference type="PROSITE" id="PS50075">
    <property type="entry name" value="CARRIER"/>
    <property type="match status" value="1"/>
</dbReference>
<dbReference type="PROSITE" id="PS52004">
    <property type="entry name" value="KS3_2"/>
    <property type="match status" value="1"/>
</dbReference>
<dbReference type="PROSITE" id="PS52019">
    <property type="entry name" value="PKS_MFAS_DH"/>
    <property type="match status" value="1"/>
</dbReference>
<protein>
    <recommendedName>
        <fullName evidence="8">Highly reducing polyketide synthase Preu5</fullName>
        <shortName evidence="8">HR-PKS Preu5</shortName>
        <ecNumber evidence="7">2.3.1.-</ecNumber>
    </recommendedName>
</protein>
<proteinExistence type="evidence at protein level"/>
<gene>
    <name evidence="8" type="primary">Preu5</name>
</gene>
<organism>
    <name type="scientific">Preussia isomera</name>
    <name type="common">Coprophilous fungus</name>
    <name type="synonym">Honoratia pisana</name>
    <dbReference type="NCBI Taxonomy" id="325670"/>
    <lineage>
        <taxon>Eukaryota</taxon>
        <taxon>Fungi</taxon>
        <taxon>Dikarya</taxon>
        <taxon>Ascomycota</taxon>
        <taxon>Pezizomycotina</taxon>
        <taxon>Dothideomycetes</taxon>
        <taxon>Pleosporomycetidae</taxon>
        <taxon>Pleosporales</taxon>
        <taxon>Sporormiaceae</taxon>
        <taxon>Preussia/Sporomiella species complex</taxon>
        <taxon>Preussia</taxon>
    </lineage>
</organism>
<evidence type="ECO:0000255" key="1"/>
<evidence type="ECO:0000255" key="2">
    <source>
        <dbReference type="PROSITE-ProRule" id="PRU00258"/>
    </source>
</evidence>
<evidence type="ECO:0000255" key="3">
    <source>
        <dbReference type="PROSITE-ProRule" id="PRU01348"/>
    </source>
</evidence>
<evidence type="ECO:0000255" key="4">
    <source>
        <dbReference type="PROSITE-ProRule" id="PRU01363"/>
    </source>
</evidence>
<evidence type="ECO:0000255" key="5">
    <source>
        <dbReference type="PROSITE-ProRule" id="PRU10022"/>
    </source>
</evidence>
<evidence type="ECO:0000256" key="6">
    <source>
        <dbReference type="SAM" id="MobiDB-lite"/>
    </source>
</evidence>
<evidence type="ECO:0000269" key="7">
    <source>
    </source>
</evidence>
<evidence type="ECO:0000303" key="8">
    <source>
    </source>
</evidence>
<evidence type="ECO:0000305" key="9">
    <source>
    </source>
</evidence>
<reference key="1">
    <citation type="journal article" date="2022" name="Front. Microbiol.">
        <title>Cloning and functional characterization of the polyketide synthases based on genome mining of Preussia isomera XL-1326.</title>
        <authorList>
            <person name="Liu Q."/>
            <person name="Zhang D."/>
            <person name="Xu Y."/>
            <person name="Gao S."/>
            <person name="Gong Y."/>
            <person name="Cai X."/>
            <person name="Yao M."/>
            <person name="Yang X."/>
        </authorList>
    </citation>
    <scope>NUCLEOTIDE SEQUENCE [MRNA]</scope>
    <scope>FUNCTION</scope>
    <scope>DOMAIN</scope>
    <scope>CATALYTIC ACTIVITY</scope>
    <source>
        <strain>XL-1326</strain>
    </source>
</reference>
<comment type="function">
    <text evidence="9">Highly reducing polyketide synthase; part of a gene cluster that mediates the biosynthesis of a yet unidentified natural product.</text>
</comment>
<comment type="cofactor">
    <cofactor evidence="2">
        <name>pantetheine 4'-phosphate</name>
        <dbReference type="ChEBI" id="CHEBI:47942"/>
    </cofactor>
</comment>
<comment type="domain">
    <text evidence="9">Multidomain protein; including a ketosynthase (KS) that catalyzes repeated decarboxylative condensation to elongate the polyketide backbone; a malonyl-CoA:ACP transacylase (MAT) that selects and transfers the extender unit malonyl-CoA; a dehydratase (DH) domain that reduces hydroxyl groups to enoyl groups; a methyltransferase (CMeT) domain responsible for the incorporation of methyl groups; an enoylreductase (ER) domain that reduces enoyl groups to alkyl group; a ketoreductase (KR) domain that catalyzes beta-ketoreduction steps; and an acyl-carrier protein (ACP) that serves as the tether of the growing and completed polyketide via its phosphopantetheinyl arm.</text>
</comment>
<sequence>MTTNDTPIAIIGLSYRAPGVGRKGLWEYLSQARSAWTTVPTDRFDHSAYYKAGADRSGVSRVRGAHFIDDVYGFDAAFFNMRAEEAKNSDPQHRLLLECALEAAEDAGHSLLSIAGKKIGVFVGSGQHEYSQRLGDDEFATHTFAGTGVAPCMAANRISYFFDIDGPSVVTDAACASSVYAAHVAVSALRNGDCEAAFIGSASLNIGPGGWIVLEKTGALSEHGRSYSYDEKASGFGRGEGAGCLLVKRLDDAIRDGDPIRALIRNSACNHSGRSEGITMPNGLAQQKLLWNVHNAVGLHPGETPVVEGHGTGTAAGDPIEAGAFTAVLGKDRTAENPLYLGSIKSNFGHLEGASGMLAMVKAIMMVENGIVLPTAGFEKINPKIKDAEKIKVAETPLPWPKGEKKRAIVTNFGFGGSNSAIVIEKAPSRDELGHETNGTNGVSVSNGVNGSNGFTNGSNGTNGHAENGNGISAQERRLYTFSAKTEKSLNAYLSSFDEYLDEAPEDSDFAKDLSYTLGQRRTQHPYRVSVVADSVEDLQEKLSTVKPSRIKDRVIAFVFTGQGAQYAQMASELGHFKVFASALKDADAQLKAIGASWSLVSELAKPAEESRVDVAEISQPACTAVQLALVELLKSWGITPTAVTGHSSGEIGAAYAAGLITFRTAIAVAYFRGQAAALLAHKQTSKGAMLALGVGFEEASALIKEHSGDAYATVAAINSPKSVTVSGDVAALEAIHKVAEEQGLFARRLKIEMAYHSRHMEAVADYYLKAIAPFCEKNESFVSKSNAARPIFVSSVTGHVEDNSVVDATYWVKNLLQPVRFADSISGLFTQLGEDKSKIPNVIVEVGPHAALKSPIKQTVESLQLQGKSAFTYLPSLVRNVDGDQALLDLAGSLFTMGAPIQLGGVNQTDSKNAQVITGLPAYEWDKSAHYELKPRPTHEKLFPGEEYHELLGRRVVSNGGKERAWRQVFTLDEMPWIRDHVVAGATIFPMTAYMSAAIEACRRTLPVSSPASAFLVQNFHVVRSMEIAEEESVELMTKLVPAATGEGTTSSTAWAFEISTYKEESGWTIHAYGQIEPEFADMSLETPTFKASLPLVDTTADLLEHDIEGTYASAGVRATRYGPTFRNNVRFWEGKGYTVLEHRLRDLGQALHEPVTRGSPVSVDPPTLDGFLQGGGPLQVDEDGRRPAQMPNYINRFRVSNKIPSDPQTRFDVVMRRLDYDVKGGRMHVGVAAFARNTDGTLSPIAEWESAAFRNIGSADENIDPASDVPDNWAWEKLPRYDFLSLEELRKTLSVGSLGEEEGIRSTNLEKAAVWYIGQALKKTVNDDFSELEDHLQRFLVWAKKTEAEYHTKFDEEPTELLQQVRDHDAQGALLCFIGEQLVPILRGEVEALEIMLAEGRLTKHYEADVVNAHLSQAVGDLADNLSNLEPSLKILEVGGGTAGTTLPILEALSRGRDEPGFLNYTFTDISAGFFEGSRQKLAKWQSRITFKKLDITKDPIDQGFSASDFDIVIAANVLHATPDMVQTMTNVRTLLKPGGKVFLLEANMHPPSVLPFSLLPGWWAAEDKYRDHAEGPMMPVKVWDQLLLDSGFSGVDVAIPGVWDSEVQLMSIMASTKIAQQEGKITICGASLDDKEIAFAKNVDDALSKHLDCKTEVKPYNTISPDDELTYIIFIDSQDHSVMLNPTPEIFKNVQKMLLHNSGLIWVVPEGASPDAHMIKGLMRTLRLEEAPKNLMVFDEVPLTPVGLKGIVKLAESLRNPEVRRDEDQDFHLHNGTIHLPRMRQLNEVKELFAVEQGIAYRKVQNIWEGGRALEMTIDAAGSPDSIYFRRTNVLQQPMGDDEVLIRVEAAGVSNRDLNLVLGSIPWAPPGYDGAGKVVKTGSHVSHLREGDDIFFLALESSAFATYKKMPAWHVAKIPSGLSITDASTLPLAYTLAVLGLIRTARLRKSDTILIHGAAGAVGQASIAIAQHIGATIFATAGTEAKREFIHQAFGIPKERIFTSRTAAFRDSILSATDNKGVNVIINSLGSEFITETWALAAKFGRFVEISKEAAFQNINLPMRAFDSNVTFSPVDIRELYKHQPDELRDVWSEVVDLLKRDVVKPIKPVTLIPISDFVSALRKLKSGDHLGKIVVTLGKDEKVVAESALSPTEVKLRTDGTYLVTGGTRGIGLDLAYWMIEHGAKNIVLLGRSGATGEEVKKMLKRYEGNDVTIRALACNVGIRDELVNVMEAIKDLPPVRGVVHSALLLSDKLFANSTHEDWQIVNTPRVQGAWNLNELLPADLDFFVLLSSFNGDTGNMGQAIYAGTAGFYDAFSRYRNARGQHTVSIALPIVLDVGYVADNNLTEILKQTLGVVLKMADIRALFKGAVSGPASPFHSNGKATAFKLYMEGQSLQNPPWKYFHPVHTRERLKADKDARLKAGATGGADMFTASWTTAEDPLEGLTEALITKVSAMTMIERDEVLPDAPLTSYSLDSLVSVELRNWIRRETTVELPLSSITQAESLRALATDILSQRVI</sequence>